<keyword id="KW-0030">Aminoacyl-tRNA synthetase</keyword>
<keyword id="KW-0067">ATP-binding</keyword>
<keyword id="KW-0963">Cytoplasm</keyword>
<keyword id="KW-0436">Ligase</keyword>
<keyword id="KW-0547">Nucleotide-binding</keyword>
<keyword id="KW-0648">Protein biosynthesis</keyword>
<dbReference type="EC" id="6.1.1.23" evidence="1"/>
<dbReference type="EMBL" id="CP000849">
    <property type="protein sequence ID" value="ABV79525.1"/>
    <property type="molecule type" value="Genomic_DNA"/>
</dbReference>
<dbReference type="RefSeq" id="WP_011477039.1">
    <property type="nucleotide sequence ID" value="NC_009883.1"/>
</dbReference>
<dbReference type="SMR" id="A8GXC5"/>
<dbReference type="KEGG" id="rbo:A1I_06025"/>
<dbReference type="HOGENOM" id="CLU_014330_3_2_5"/>
<dbReference type="GO" id="GO:0005737">
    <property type="term" value="C:cytoplasm"/>
    <property type="evidence" value="ECO:0007669"/>
    <property type="project" value="UniProtKB-SubCell"/>
</dbReference>
<dbReference type="GO" id="GO:0004815">
    <property type="term" value="F:aspartate-tRNA ligase activity"/>
    <property type="evidence" value="ECO:0007669"/>
    <property type="project" value="UniProtKB-UniRule"/>
</dbReference>
<dbReference type="GO" id="GO:0050560">
    <property type="term" value="F:aspartate-tRNA(Asn) ligase activity"/>
    <property type="evidence" value="ECO:0007669"/>
    <property type="project" value="UniProtKB-EC"/>
</dbReference>
<dbReference type="GO" id="GO:0005524">
    <property type="term" value="F:ATP binding"/>
    <property type="evidence" value="ECO:0007669"/>
    <property type="project" value="UniProtKB-UniRule"/>
</dbReference>
<dbReference type="GO" id="GO:0003676">
    <property type="term" value="F:nucleic acid binding"/>
    <property type="evidence" value="ECO:0007669"/>
    <property type="project" value="InterPro"/>
</dbReference>
<dbReference type="GO" id="GO:0006422">
    <property type="term" value="P:aspartyl-tRNA aminoacylation"/>
    <property type="evidence" value="ECO:0007669"/>
    <property type="project" value="UniProtKB-UniRule"/>
</dbReference>
<dbReference type="CDD" id="cd00777">
    <property type="entry name" value="AspRS_core"/>
    <property type="match status" value="1"/>
</dbReference>
<dbReference type="CDD" id="cd04317">
    <property type="entry name" value="EcAspRS_like_N"/>
    <property type="match status" value="1"/>
</dbReference>
<dbReference type="Gene3D" id="3.30.930.10">
    <property type="entry name" value="Bira Bifunctional Protein, Domain 2"/>
    <property type="match status" value="1"/>
</dbReference>
<dbReference type="Gene3D" id="3.30.1360.30">
    <property type="entry name" value="GAD-like domain"/>
    <property type="match status" value="1"/>
</dbReference>
<dbReference type="Gene3D" id="2.40.50.140">
    <property type="entry name" value="Nucleic acid-binding proteins"/>
    <property type="match status" value="1"/>
</dbReference>
<dbReference type="HAMAP" id="MF_00044">
    <property type="entry name" value="Asp_tRNA_synth_type1"/>
    <property type="match status" value="1"/>
</dbReference>
<dbReference type="InterPro" id="IPR004364">
    <property type="entry name" value="Aa-tRNA-synt_II"/>
</dbReference>
<dbReference type="InterPro" id="IPR006195">
    <property type="entry name" value="aa-tRNA-synth_II"/>
</dbReference>
<dbReference type="InterPro" id="IPR045864">
    <property type="entry name" value="aa-tRNA-synth_II/BPL/LPL"/>
</dbReference>
<dbReference type="InterPro" id="IPR004524">
    <property type="entry name" value="Asp-tRNA-ligase_1"/>
</dbReference>
<dbReference type="InterPro" id="IPR047089">
    <property type="entry name" value="Asp-tRNA-ligase_1_N"/>
</dbReference>
<dbReference type="InterPro" id="IPR002312">
    <property type="entry name" value="Asp/Asn-tRNA-synth_IIb"/>
</dbReference>
<dbReference type="InterPro" id="IPR047090">
    <property type="entry name" value="AspRS_core"/>
</dbReference>
<dbReference type="InterPro" id="IPR004115">
    <property type="entry name" value="GAD-like_sf"/>
</dbReference>
<dbReference type="InterPro" id="IPR029351">
    <property type="entry name" value="GAD_dom"/>
</dbReference>
<dbReference type="InterPro" id="IPR012340">
    <property type="entry name" value="NA-bd_OB-fold"/>
</dbReference>
<dbReference type="InterPro" id="IPR004365">
    <property type="entry name" value="NA-bd_OB_tRNA"/>
</dbReference>
<dbReference type="NCBIfam" id="TIGR00459">
    <property type="entry name" value="aspS_bact"/>
    <property type="match status" value="1"/>
</dbReference>
<dbReference type="NCBIfam" id="NF001750">
    <property type="entry name" value="PRK00476.1"/>
    <property type="match status" value="1"/>
</dbReference>
<dbReference type="PANTHER" id="PTHR22594:SF5">
    <property type="entry name" value="ASPARTATE--TRNA LIGASE, MITOCHONDRIAL"/>
    <property type="match status" value="1"/>
</dbReference>
<dbReference type="PANTHER" id="PTHR22594">
    <property type="entry name" value="ASPARTYL/LYSYL-TRNA SYNTHETASE"/>
    <property type="match status" value="1"/>
</dbReference>
<dbReference type="Pfam" id="PF02938">
    <property type="entry name" value="GAD"/>
    <property type="match status" value="1"/>
</dbReference>
<dbReference type="Pfam" id="PF00152">
    <property type="entry name" value="tRNA-synt_2"/>
    <property type="match status" value="1"/>
</dbReference>
<dbReference type="Pfam" id="PF01336">
    <property type="entry name" value="tRNA_anti-codon"/>
    <property type="match status" value="1"/>
</dbReference>
<dbReference type="PRINTS" id="PR01042">
    <property type="entry name" value="TRNASYNTHASP"/>
</dbReference>
<dbReference type="SUPFAM" id="SSF55681">
    <property type="entry name" value="Class II aaRS and biotin synthetases"/>
    <property type="match status" value="1"/>
</dbReference>
<dbReference type="SUPFAM" id="SSF55261">
    <property type="entry name" value="GAD domain-like"/>
    <property type="match status" value="1"/>
</dbReference>
<dbReference type="SUPFAM" id="SSF50249">
    <property type="entry name" value="Nucleic acid-binding proteins"/>
    <property type="match status" value="1"/>
</dbReference>
<dbReference type="PROSITE" id="PS50862">
    <property type="entry name" value="AA_TRNA_LIGASE_II"/>
    <property type="match status" value="1"/>
</dbReference>
<accession>A8GXC5</accession>
<feature type="chain" id="PRO_1000006746" description="Aspartate--tRNA(Asp/Asn) ligase">
    <location>
        <begin position="1"/>
        <end position="602"/>
    </location>
</feature>
<feature type="region of interest" description="Aspartate" evidence="1">
    <location>
        <begin position="200"/>
        <end position="203"/>
    </location>
</feature>
<feature type="binding site" evidence="1">
    <location>
        <position position="176"/>
    </location>
    <ligand>
        <name>L-aspartate</name>
        <dbReference type="ChEBI" id="CHEBI:29991"/>
    </ligand>
</feature>
<feature type="binding site" evidence="1">
    <location>
        <begin position="222"/>
        <end position="224"/>
    </location>
    <ligand>
        <name>ATP</name>
        <dbReference type="ChEBI" id="CHEBI:30616"/>
    </ligand>
</feature>
<feature type="binding site" evidence="1">
    <location>
        <position position="222"/>
    </location>
    <ligand>
        <name>L-aspartate</name>
        <dbReference type="ChEBI" id="CHEBI:29991"/>
    </ligand>
</feature>
<feature type="binding site" evidence="1">
    <location>
        <position position="452"/>
    </location>
    <ligand>
        <name>L-aspartate</name>
        <dbReference type="ChEBI" id="CHEBI:29991"/>
    </ligand>
</feature>
<feature type="binding site" evidence="1">
    <location>
        <position position="490"/>
    </location>
    <ligand>
        <name>ATP</name>
        <dbReference type="ChEBI" id="CHEBI:30616"/>
    </ligand>
</feature>
<feature type="binding site" evidence="1">
    <location>
        <position position="497"/>
    </location>
    <ligand>
        <name>L-aspartate</name>
        <dbReference type="ChEBI" id="CHEBI:29991"/>
    </ligand>
</feature>
<feature type="binding site" evidence="1">
    <location>
        <begin position="542"/>
        <end position="545"/>
    </location>
    <ligand>
        <name>ATP</name>
        <dbReference type="ChEBI" id="CHEBI:30616"/>
    </ligand>
</feature>
<feature type="site" description="Important for tRNA non-discrimination" evidence="1">
    <location>
        <position position="33"/>
    </location>
</feature>
<gene>
    <name evidence="1" type="primary">aspS</name>
    <name type="ordered locus">A1I_06025</name>
</gene>
<reference key="1">
    <citation type="submission" date="2007-09" db="EMBL/GenBank/DDBJ databases">
        <title>Complete genome sequencing of Rickettsia bellii.</title>
        <authorList>
            <person name="Madan A."/>
            <person name="Lee H."/>
            <person name="Madan A."/>
            <person name="Yoon J.-G."/>
            <person name="Ryu G.-Y."/>
            <person name="Dasch G."/>
            <person name="Ereemeva M."/>
        </authorList>
    </citation>
    <scope>NUCLEOTIDE SEQUENCE [LARGE SCALE GENOMIC DNA]</scope>
    <source>
        <strain>OSU 85-389</strain>
    </source>
</reference>
<organism>
    <name type="scientific">Rickettsia bellii (strain OSU 85-389)</name>
    <dbReference type="NCBI Taxonomy" id="391896"/>
    <lineage>
        <taxon>Bacteria</taxon>
        <taxon>Pseudomonadati</taxon>
        <taxon>Pseudomonadota</taxon>
        <taxon>Alphaproteobacteria</taxon>
        <taxon>Rickettsiales</taxon>
        <taxon>Rickettsiaceae</taxon>
        <taxon>Rickettsieae</taxon>
        <taxon>Rickettsia</taxon>
        <taxon>belli group</taxon>
    </lineage>
</organism>
<protein>
    <recommendedName>
        <fullName evidence="1">Aspartate--tRNA(Asp/Asn) ligase</fullName>
        <ecNumber evidence="1">6.1.1.23</ecNumber>
    </recommendedName>
    <alternativeName>
        <fullName evidence="1">Aspartyl-tRNA synthetase</fullName>
        <shortName evidence="1">AspRS</shortName>
    </alternativeName>
    <alternativeName>
        <fullName evidence="1">Non-discriminating aspartyl-tRNA synthetase</fullName>
        <shortName evidence="1">ND-AspRS</shortName>
    </alternativeName>
</protein>
<proteinExistence type="inferred from homology"/>
<evidence type="ECO:0000255" key="1">
    <source>
        <dbReference type="HAMAP-Rule" id="MF_00044"/>
    </source>
</evidence>
<sequence length="602" mass="68048">MHKYRTHNCNELKISDVGAEVKLSGWVHRRRDHGNLVFVDLRDHYGITQIVFTDQNPQLMDDASRLRYESVVTVIGKVVARSEETINNTLPTGHIEVLAGEFIVESAADTLPFVINTEKDAPEDSRLKHRFLDLRREKLHNNIMLRSQIISYIRQLMTARGFTEFQTPILTASSPEGARDFLVPSRLHPGKFYALPQAPQQFKQLLMVSGFDRYFQIAPCFRDEDARADRSPGEFYQLDIEMSFVTQEDIFSTIEPVMYELFTKFTDKKVSEAPFIRIPYNESMLKYGSDKPDLRNPIVIADVTEIFRDSDFTIFRENIKKGSIVRAIPAPYAAAQPRSFFDKMIEFAISEGAGGLGYIQFSETGEAKGPVAKFLSTQQLEDLKATANISNGDAVFFASDKKDKAAKLAGKVRIKLADELDLLEKDCFKFCWITDFPFYELNEETGKIDFSHNPFSMPQGGLEALENAKTTEELLELTAYQYDIVCNGIELSSGAVRNHKPEIMYKAFAIAGYSEEEVDKRFGGMIRAFKFGAPPHGGIAPGIDRIVMLLAEATNIREIIAFPLNQQAEDLLMNAPNYVEDKALKELNVMLSPSARKNAEKE</sequence>
<name>SYDND_RICB8</name>
<comment type="function">
    <text evidence="1">Aspartyl-tRNA synthetase with relaxed tRNA specificity since it is able to aspartylate not only its cognate tRNA(Asp) but also tRNA(Asn). Reaction proceeds in two steps: L-aspartate is first activated by ATP to form Asp-AMP and then transferred to the acceptor end of tRNA(Asp/Asn).</text>
</comment>
<comment type="catalytic activity">
    <reaction evidence="1">
        <text>tRNA(Asx) + L-aspartate + ATP = L-aspartyl-tRNA(Asx) + AMP + diphosphate</text>
        <dbReference type="Rhea" id="RHEA:18349"/>
        <dbReference type="Rhea" id="RHEA-COMP:9710"/>
        <dbReference type="Rhea" id="RHEA-COMP:9711"/>
        <dbReference type="ChEBI" id="CHEBI:29991"/>
        <dbReference type="ChEBI" id="CHEBI:30616"/>
        <dbReference type="ChEBI" id="CHEBI:33019"/>
        <dbReference type="ChEBI" id="CHEBI:78442"/>
        <dbReference type="ChEBI" id="CHEBI:78516"/>
        <dbReference type="ChEBI" id="CHEBI:456215"/>
        <dbReference type="EC" id="6.1.1.23"/>
    </reaction>
</comment>
<comment type="subunit">
    <text evidence="1">Homodimer.</text>
</comment>
<comment type="subcellular location">
    <subcellularLocation>
        <location evidence="1">Cytoplasm</location>
    </subcellularLocation>
</comment>
<comment type="similarity">
    <text evidence="1">Belongs to the class-II aminoacyl-tRNA synthetase family. Type 1 subfamily.</text>
</comment>